<protein>
    <recommendedName>
        <fullName>TATA-box-binding protein 1</fullName>
    </recommendedName>
    <alternativeName>
        <fullName>TATA sequence-binding protein 1</fullName>
        <shortName>TBP-1</shortName>
    </alternativeName>
    <alternativeName>
        <fullName>TATA-binding factor 1</fullName>
    </alternativeName>
    <alternativeName>
        <fullName>TATA-box factor 1</fullName>
    </alternativeName>
    <alternativeName>
        <fullName>Transcription initiation factor TFIID TBP-1 subunit</fullName>
    </alternativeName>
</protein>
<comment type="function">
    <text>General transcription factor that functions at the core of the DNA-binding multiprotein factor TFIID. Binding of TFIID to the TATA box is the initial transcriptional step of the pre-initiation complex (PIC), playing a role in the activation of eukaryotic genes transcribed by RNA polymerase II.</text>
</comment>
<comment type="subunit">
    <text>Belongs to the TFIID complex together with the TBP-associated factors (TAFs). Binds DNA as monomer.</text>
</comment>
<comment type="subcellular location">
    <subcellularLocation>
        <location>Nucleus</location>
    </subcellularLocation>
</comment>
<comment type="similarity">
    <text evidence="1">Belongs to the TBP family.</text>
</comment>
<proteinExistence type="evidence at transcript level"/>
<evidence type="ECO:0000305" key="1"/>
<sequence>MAAAAVDPMVLGLGTSGGASGSGVVGGGVGRAGGGGAVMEGAQPVDLARHPSGIVPVLQNIVSTVNLDCRLDLKQIALQARNAEYNPKRFAAVIMRIRDPKTTALIFASGKMVCTGAKSEEHSKLAARKYARIVQKLGFPATFKDFKIQNIVASCDVKFPIRLEGLAYSHGAFSSYEPELFPGLIYRMKQPKIVLLVFVSGKIVLTGAKVRDEIYAAFENIYPVLTEYRKSQQ</sequence>
<feature type="chain" id="PRO_0000153985" description="TATA-box-binding protein 1">
    <location>
        <begin position="1"/>
        <end position="233"/>
    </location>
</feature>
<feature type="repeat" description="1">
    <location>
        <begin position="58"/>
        <end position="134"/>
    </location>
</feature>
<feature type="repeat" description="2">
    <location>
        <begin position="148"/>
        <end position="225"/>
    </location>
</feature>
<name>TBP1_WHEAT</name>
<keyword id="KW-0238">DNA-binding</keyword>
<keyword id="KW-0539">Nucleus</keyword>
<keyword id="KW-1185">Reference proteome</keyword>
<keyword id="KW-0677">Repeat</keyword>
<keyword id="KW-0804">Transcription</keyword>
<organism>
    <name type="scientific">Triticum aestivum</name>
    <name type="common">Wheat</name>
    <dbReference type="NCBI Taxonomy" id="4565"/>
    <lineage>
        <taxon>Eukaryota</taxon>
        <taxon>Viridiplantae</taxon>
        <taxon>Streptophyta</taxon>
        <taxon>Embryophyta</taxon>
        <taxon>Tracheophyta</taxon>
        <taxon>Spermatophyta</taxon>
        <taxon>Magnoliopsida</taxon>
        <taxon>Liliopsida</taxon>
        <taxon>Poales</taxon>
        <taxon>Poaceae</taxon>
        <taxon>BOP clade</taxon>
        <taxon>Pooideae</taxon>
        <taxon>Triticodae</taxon>
        <taxon>Triticeae</taxon>
        <taxon>Triticinae</taxon>
        <taxon>Triticum</taxon>
    </lineage>
</organism>
<reference key="1">
    <citation type="journal article" date="1992" name="Plant Mol. Biol.">
        <title>Isolation and characterization of a cDNA clone encoding the TATA box-binding protein (TFIID) from wheat.</title>
        <authorList>
            <person name="Kawata T."/>
            <person name="Minami M."/>
            <person name="Tamura T."/>
            <person name="Sumita K."/>
            <person name="Iwabuchi M."/>
        </authorList>
    </citation>
    <scope>NUCLEOTIDE SEQUENCE [MRNA]</scope>
</reference>
<gene>
    <name type="primary">TBP1</name>
    <name type="synonym">TFIID</name>
</gene>
<dbReference type="EMBL" id="X59874">
    <property type="protein sequence ID" value="CAA42531.1"/>
    <property type="molecule type" value="mRNA"/>
</dbReference>
<dbReference type="PIR" id="S23522">
    <property type="entry name" value="S23522"/>
</dbReference>
<dbReference type="RefSeq" id="NP_001392766.1">
    <property type="nucleotide sequence ID" value="NM_001405837.1"/>
</dbReference>
<dbReference type="SMR" id="P26356"/>
<dbReference type="STRING" id="4565.P26356"/>
<dbReference type="PaxDb" id="4565-Traes_1AL_60B57FD46.2"/>
<dbReference type="EnsemblPlants" id="TraesARI1A03G00069440.1">
    <property type="protein sequence ID" value="TraesARI1A03G00069440.1"/>
    <property type="gene ID" value="TraesARI1A03G00069440"/>
</dbReference>
<dbReference type="EnsemblPlants" id="TraesARI1B03G00259610.1">
    <property type="protein sequence ID" value="TraesARI1B03G00259610.1"/>
    <property type="gene ID" value="TraesARI1B03G00259610"/>
</dbReference>
<dbReference type="EnsemblPlants" id="TraesCAD_scaffold_103774_01G000100.1">
    <property type="protein sequence ID" value="TraesCAD_scaffold_103774_01G000100.1"/>
    <property type="gene ID" value="TraesCAD_scaffold_103774_01G000100"/>
</dbReference>
<dbReference type="EnsemblPlants" id="TraesCLE_scaffold_121292_01G000100.1">
    <property type="protein sequence ID" value="TraesCLE_scaffold_121292_01G000100.1"/>
    <property type="gene ID" value="TraesCLE_scaffold_121292_01G000100"/>
</dbReference>
<dbReference type="EnsemblPlants" id="TraesCS1A02G139600.1">
    <property type="protein sequence ID" value="TraesCS1A02G139600.1"/>
    <property type="gene ID" value="TraesCS1A02G139600"/>
</dbReference>
<dbReference type="EnsemblPlants" id="TraesCS1A03G0374000.1">
    <property type="protein sequence ID" value="TraesCS1A03G0374000.1.CDS"/>
    <property type="gene ID" value="TraesCS1A03G0374000"/>
</dbReference>
<dbReference type="EnsemblPlants" id="TraesJUL1A03G00067240.1">
    <property type="protein sequence ID" value="TraesJUL1A03G00067240.1"/>
    <property type="gene ID" value="TraesJUL1A03G00067240"/>
</dbReference>
<dbReference type="EnsemblPlants" id="TraesJULUn03G04550960.1">
    <property type="protein sequence ID" value="TraesJULUn03G04550960.1"/>
    <property type="gene ID" value="TraesJULUn03G04550960"/>
</dbReference>
<dbReference type="EnsemblPlants" id="TraesKAR1A01G0155570.1">
    <property type="protein sequence ID" value="cds.TraesKAR1A01G0155570.1"/>
    <property type="gene ID" value="TraesKAR1A01G0155570"/>
</dbReference>
<dbReference type="EnsemblPlants" id="TraesKAR1B01G0160000.1">
    <property type="protein sequence ID" value="cds.TraesKAR1B01G0160000.1"/>
    <property type="gene ID" value="TraesKAR1B01G0160000"/>
</dbReference>
<dbReference type="EnsemblPlants" id="TraesLAC1A03G00070190.1">
    <property type="protein sequence ID" value="TraesLAC1A03G00070190.1"/>
    <property type="gene ID" value="TraesLAC1A03G00070190"/>
</dbReference>
<dbReference type="EnsemblPlants" id="TraesLAC1B03G00257270.1">
    <property type="protein sequence ID" value="TraesLAC1B03G00257270.1"/>
    <property type="gene ID" value="TraesLAC1B03G00257270"/>
</dbReference>
<dbReference type="EnsemblPlants" id="TraesLDM1A03G00067530.1">
    <property type="protein sequence ID" value="TraesLDM1A03G00067530.1"/>
    <property type="gene ID" value="TraesLDM1A03G00067530"/>
</dbReference>
<dbReference type="EnsemblPlants" id="TraesMAC1A03G00069020.1">
    <property type="protein sequence ID" value="TraesMAC1A03G00069020.1"/>
    <property type="gene ID" value="TraesMAC1A03G00069020"/>
</dbReference>
<dbReference type="EnsemblPlants" id="TraesMACUn03G04536540.1">
    <property type="protein sequence ID" value="TraesMACUn03G04536540.1"/>
    <property type="gene ID" value="TraesMACUn03G04536540"/>
</dbReference>
<dbReference type="EnsemblPlants" id="TraesMACUn03G04536550.1">
    <property type="protein sequence ID" value="TraesMACUn03G04536550.1"/>
    <property type="gene ID" value="TraesMACUn03G04536550"/>
</dbReference>
<dbReference type="EnsemblPlants" id="TraesMACUn03G04539640.1">
    <property type="protein sequence ID" value="TraesMACUn03G04539640.1"/>
    <property type="gene ID" value="TraesMACUn03G04539640"/>
</dbReference>
<dbReference type="EnsemblPlants" id="TraesNOR1A03G00068450.1">
    <property type="protein sequence ID" value="TraesNOR1A03G00068450.1"/>
    <property type="gene ID" value="TraesNOR1A03G00068450"/>
</dbReference>
<dbReference type="EnsemblPlants" id="TraesPARA_EIv1.0_0066500.1">
    <property type="protein sequence ID" value="TraesPARA_EIv1.0_0066500.1.CDS"/>
    <property type="gene ID" value="TraesPARA_EIv1.0_0066500"/>
</dbReference>
<dbReference type="EnsemblPlants" id="TraesPARA_EIv1.0_0145430.1">
    <property type="protein sequence ID" value="TraesPARA_EIv1.0_0145430.1.CDS"/>
    <property type="gene ID" value="TraesPARA_EIv1.0_0145430"/>
</dbReference>
<dbReference type="EnsemblPlants" id="TraesRN1A0100410000.1">
    <property type="protein sequence ID" value="TraesRN1A0100410000.1"/>
    <property type="gene ID" value="TraesRN1A0100410000"/>
</dbReference>
<dbReference type="EnsemblPlants" id="TraesROB_scaffold_101976_01G000100.1">
    <property type="protein sequence ID" value="TraesROB_scaffold_101976_01G000100.1"/>
    <property type="gene ID" value="TraesROB_scaffold_101976_01G000100"/>
</dbReference>
<dbReference type="EnsemblPlants" id="TraesSYM1A03G00070280.1">
    <property type="protein sequence ID" value="TraesSYM1A03G00070280.1"/>
    <property type="gene ID" value="TraesSYM1A03G00070280"/>
</dbReference>
<dbReference type="EnsemblPlants" id="TraesWEE_scaffold_135801_01G000100.1">
    <property type="protein sequence ID" value="TraesWEE_scaffold_135801_01G000100.1"/>
    <property type="gene ID" value="TraesWEE_scaffold_135801_01G000100"/>
</dbReference>
<dbReference type="GeneID" id="606393"/>
<dbReference type="Gramene" id="TraesARI1A03G00069440.1">
    <property type="protein sequence ID" value="TraesARI1A03G00069440.1"/>
    <property type="gene ID" value="TraesARI1A03G00069440"/>
</dbReference>
<dbReference type="Gramene" id="TraesARI1B03G00259610.1">
    <property type="protein sequence ID" value="TraesARI1B03G00259610.1"/>
    <property type="gene ID" value="TraesARI1B03G00259610"/>
</dbReference>
<dbReference type="Gramene" id="TraesCAD_scaffold_103774_01G000100.1">
    <property type="protein sequence ID" value="TraesCAD_scaffold_103774_01G000100.1"/>
    <property type="gene ID" value="TraesCAD_scaffold_103774_01G000100"/>
</dbReference>
<dbReference type="Gramene" id="TraesCLE_scaffold_121292_01G000100.1">
    <property type="protein sequence ID" value="TraesCLE_scaffold_121292_01G000100.1"/>
    <property type="gene ID" value="TraesCLE_scaffold_121292_01G000100"/>
</dbReference>
<dbReference type="Gramene" id="TraesCS1A02G139600.1">
    <property type="protein sequence ID" value="TraesCS1A02G139600.1"/>
    <property type="gene ID" value="TraesCS1A02G139600"/>
</dbReference>
<dbReference type="Gramene" id="TraesCS1A03G0374000.1">
    <property type="protein sequence ID" value="TraesCS1A03G0374000.1.CDS"/>
    <property type="gene ID" value="TraesCS1A03G0374000"/>
</dbReference>
<dbReference type="Gramene" id="TraesJUL1A03G00067240.1">
    <property type="protein sequence ID" value="TraesJUL1A03G00067240.1"/>
    <property type="gene ID" value="TraesJUL1A03G00067240"/>
</dbReference>
<dbReference type="Gramene" id="TraesJULUn03G04550960.1">
    <property type="protein sequence ID" value="TraesJULUn03G04550960.1"/>
    <property type="gene ID" value="TraesJULUn03G04550960"/>
</dbReference>
<dbReference type="Gramene" id="TraesKAR1A01G0155570.1">
    <property type="protein sequence ID" value="cds.TraesKAR1A01G0155570.1"/>
    <property type="gene ID" value="TraesKAR1A01G0155570"/>
</dbReference>
<dbReference type="Gramene" id="TraesKAR1B01G0160000.1">
    <property type="protein sequence ID" value="cds.TraesKAR1B01G0160000.1"/>
    <property type="gene ID" value="TraesKAR1B01G0160000"/>
</dbReference>
<dbReference type="Gramene" id="TraesLAC1A03G00070190.1">
    <property type="protein sequence ID" value="TraesLAC1A03G00070190.1"/>
    <property type="gene ID" value="TraesLAC1A03G00070190"/>
</dbReference>
<dbReference type="Gramene" id="TraesLAC1B03G00257270.1">
    <property type="protein sequence ID" value="TraesLAC1B03G00257270.1"/>
    <property type="gene ID" value="TraesLAC1B03G00257270"/>
</dbReference>
<dbReference type="Gramene" id="TraesLDM1A03G00067530.1">
    <property type="protein sequence ID" value="TraesLDM1A03G00067530.1"/>
    <property type="gene ID" value="TraesLDM1A03G00067530"/>
</dbReference>
<dbReference type="Gramene" id="TraesMAC1A03G00069020.1">
    <property type="protein sequence ID" value="TraesMAC1A03G00069020.1"/>
    <property type="gene ID" value="TraesMAC1A03G00069020"/>
</dbReference>
<dbReference type="Gramene" id="TraesMACUn03G04536540.1">
    <property type="protein sequence ID" value="TraesMACUn03G04536540.1"/>
    <property type="gene ID" value="TraesMACUn03G04536540"/>
</dbReference>
<dbReference type="Gramene" id="TraesMACUn03G04536550.1">
    <property type="protein sequence ID" value="TraesMACUn03G04536550.1"/>
    <property type="gene ID" value="TraesMACUn03G04536550"/>
</dbReference>
<dbReference type="Gramene" id="TraesMACUn03G04539640.1">
    <property type="protein sequence ID" value="TraesMACUn03G04539640.1"/>
    <property type="gene ID" value="TraesMACUn03G04539640"/>
</dbReference>
<dbReference type="Gramene" id="TraesNOR1A03G00068450.1">
    <property type="protein sequence ID" value="TraesNOR1A03G00068450.1"/>
    <property type="gene ID" value="TraesNOR1A03G00068450"/>
</dbReference>
<dbReference type="Gramene" id="TraesPARA_EIv1.0_0066500.1">
    <property type="protein sequence ID" value="TraesPARA_EIv1.0_0066500.1.CDS"/>
    <property type="gene ID" value="TraesPARA_EIv1.0_0066500"/>
</dbReference>
<dbReference type="Gramene" id="TraesPARA_EIv1.0_0145430.1">
    <property type="protein sequence ID" value="TraesPARA_EIv1.0_0145430.1.CDS"/>
    <property type="gene ID" value="TraesPARA_EIv1.0_0145430"/>
</dbReference>
<dbReference type="Gramene" id="TraesRN1A0100410000.1">
    <property type="protein sequence ID" value="TraesRN1A0100410000.1"/>
    <property type="gene ID" value="TraesRN1A0100410000"/>
</dbReference>
<dbReference type="Gramene" id="TraesROB_scaffold_101976_01G000100.1">
    <property type="protein sequence ID" value="TraesROB_scaffold_101976_01G000100.1"/>
    <property type="gene ID" value="TraesROB_scaffold_101976_01G000100"/>
</dbReference>
<dbReference type="Gramene" id="TraesSYM1A03G00070280.1">
    <property type="protein sequence ID" value="TraesSYM1A03G00070280.1"/>
    <property type="gene ID" value="TraesSYM1A03G00070280"/>
</dbReference>
<dbReference type="Gramene" id="TraesWEE_scaffold_135801_01G000100.1">
    <property type="protein sequence ID" value="TraesWEE_scaffold_135801_01G000100.1"/>
    <property type="gene ID" value="TraesWEE_scaffold_135801_01G000100"/>
</dbReference>
<dbReference type="eggNOG" id="KOG3302">
    <property type="taxonomic scope" value="Eukaryota"/>
</dbReference>
<dbReference type="OMA" id="WDDEINT"/>
<dbReference type="OrthoDB" id="2127950at2759"/>
<dbReference type="Proteomes" id="UP000019116">
    <property type="component" value="Chromosome 1A"/>
</dbReference>
<dbReference type="GO" id="GO:0005634">
    <property type="term" value="C:nucleus"/>
    <property type="evidence" value="ECO:0007669"/>
    <property type="project" value="UniProtKB-SubCell"/>
</dbReference>
<dbReference type="GO" id="GO:0003677">
    <property type="term" value="F:DNA binding"/>
    <property type="evidence" value="ECO:0007669"/>
    <property type="project" value="UniProtKB-KW"/>
</dbReference>
<dbReference type="GO" id="GO:0016251">
    <property type="term" value="F:RNA polymerase II general transcription initiation factor activity"/>
    <property type="evidence" value="ECO:0000318"/>
    <property type="project" value="GO_Central"/>
</dbReference>
<dbReference type="GO" id="GO:0006352">
    <property type="term" value="P:DNA-templated transcription initiation"/>
    <property type="evidence" value="ECO:0000318"/>
    <property type="project" value="GO_Central"/>
</dbReference>
<dbReference type="CDD" id="cd04516">
    <property type="entry name" value="TBP_eukaryotes"/>
    <property type="match status" value="1"/>
</dbReference>
<dbReference type="FunFam" id="3.30.310.10:FF:000001">
    <property type="entry name" value="TATA-box-binding protein 2"/>
    <property type="match status" value="1"/>
</dbReference>
<dbReference type="FunFam" id="3.30.310.10:FF:000002">
    <property type="entry name" value="TATA-box-binding protein 2"/>
    <property type="match status" value="1"/>
</dbReference>
<dbReference type="Gene3D" id="3.30.310.10">
    <property type="entry name" value="TATA-Binding Protein"/>
    <property type="match status" value="2"/>
</dbReference>
<dbReference type="HAMAP" id="MF_00408">
    <property type="entry name" value="TATA_bind_prot_arch"/>
    <property type="match status" value="1"/>
</dbReference>
<dbReference type="InterPro" id="IPR000814">
    <property type="entry name" value="TBP"/>
</dbReference>
<dbReference type="InterPro" id="IPR030491">
    <property type="entry name" value="TBP_CS"/>
</dbReference>
<dbReference type="InterPro" id="IPR012295">
    <property type="entry name" value="TBP_dom_sf"/>
</dbReference>
<dbReference type="InterPro" id="IPR033710">
    <property type="entry name" value="TBP_eukaryotic"/>
</dbReference>
<dbReference type="PANTHER" id="PTHR10126">
    <property type="entry name" value="TATA-BOX BINDING PROTEIN"/>
    <property type="match status" value="1"/>
</dbReference>
<dbReference type="Pfam" id="PF00352">
    <property type="entry name" value="TBP"/>
    <property type="match status" value="2"/>
</dbReference>
<dbReference type="PRINTS" id="PR00686">
    <property type="entry name" value="TIFACTORIID"/>
</dbReference>
<dbReference type="SUPFAM" id="SSF55945">
    <property type="entry name" value="TATA-box binding protein-like"/>
    <property type="match status" value="2"/>
</dbReference>
<dbReference type="PROSITE" id="PS00351">
    <property type="entry name" value="TFIID"/>
    <property type="match status" value="2"/>
</dbReference>
<accession>P26356</accession>